<protein>
    <recommendedName>
        <fullName>Probable doxorubicin resistance ABC transporter permease protein DrrC</fullName>
    </recommendedName>
</protein>
<evidence type="ECO:0000255" key="1"/>
<evidence type="ECO:0000255" key="2">
    <source>
        <dbReference type="PROSITE-ProRule" id="PRU00442"/>
    </source>
</evidence>
<evidence type="ECO:0000305" key="3"/>
<name>DRRC_MYCTU</name>
<accession>P9WG21</accession>
<accession>L0TBB3</accession>
<accession>P96207</accession>
<accession>Q7D6E6</accession>
<gene>
    <name type="primary">drrC</name>
    <name type="ordered locus">Rv2938</name>
</gene>
<comment type="function">
    <text>Probably part of the ABC transporter complex DrrABC involved in doxorubicin resistance. Probably responsible for the translocation of the substrate across the membrane.</text>
</comment>
<comment type="subunit">
    <text evidence="3">The complex is composed of two ATP-binding proteins (DrrA) and two transmembrane proteins (DrrB and DrrC).</text>
</comment>
<comment type="subcellular location">
    <subcellularLocation>
        <location evidence="3">Cell membrane</location>
        <topology evidence="3">Multi-pass membrane protein</topology>
    </subcellularLocation>
</comment>
<comment type="miscellaneous">
    <text>Was identified as a high-confidence drug target.</text>
</comment>
<comment type="similarity">
    <text evidence="3">Belongs to the ABC-2 integral membrane protein family.</text>
</comment>
<organism>
    <name type="scientific">Mycobacterium tuberculosis (strain ATCC 25618 / H37Rv)</name>
    <dbReference type="NCBI Taxonomy" id="83332"/>
    <lineage>
        <taxon>Bacteria</taxon>
        <taxon>Bacillati</taxon>
        <taxon>Actinomycetota</taxon>
        <taxon>Actinomycetes</taxon>
        <taxon>Mycobacteriales</taxon>
        <taxon>Mycobacteriaceae</taxon>
        <taxon>Mycobacterium</taxon>
        <taxon>Mycobacterium tuberculosis complex</taxon>
    </lineage>
</organism>
<keyword id="KW-0046">Antibiotic resistance</keyword>
<keyword id="KW-1003">Cell membrane</keyword>
<keyword id="KW-0472">Membrane</keyword>
<keyword id="KW-1185">Reference proteome</keyword>
<keyword id="KW-0812">Transmembrane</keyword>
<keyword id="KW-1133">Transmembrane helix</keyword>
<keyword id="KW-0813">Transport</keyword>
<reference key="1">
    <citation type="journal article" date="1998" name="Nature">
        <title>Deciphering the biology of Mycobacterium tuberculosis from the complete genome sequence.</title>
        <authorList>
            <person name="Cole S.T."/>
            <person name="Brosch R."/>
            <person name="Parkhill J."/>
            <person name="Garnier T."/>
            <person name="Churcher C.M."/>
            <person name="Harris D.E."/>
            <person name="Gordon S.V."/>
            <person name="Eiglmeier K."/>
            <person name="Gas S."/>
            <person name="Barry C.E. III"/>
            <person name="Tekaia F."/>
            <person name="Badcock K."/>
            <person name="Basham D."/>
            <person name="Brown D."/>
            <person name="Chillingworth T."/>
            <person name="Connor R."/>
            <person name="Davies R.M."/>
            <person name="Devlin K."/>
            <person name="Feltwell T."/>
            <person name="Gentles S."/>
            <person name="Hamlin N."/>
            <person name="Holroyd S."/>
            <person name="Hornsby T."/>
            <person name="Jagels K."/>
            <person name="Krogh A."/>
            <person name="McLean J."/>
            <person name="Moule S."/>
            <person name="Murphy L.D."/>
            <person name="Oliver S."/>
            <person name="Osborne J."/>
            <person name="Quail M.A."/>
            <person name="Rajandream M.A."/>
            <person name="Rogers J."/>
            <person name="Rutter S."/>
            <person name="Seeger K."/>
            <person name="Skelton S."/>
            <person name="Squares S."/>
            <person name="Squares R."/>
            <person name="Sulston J.E."/>
            <person name="Taylor K."/>
            <person name="Whitehead S."/>
            <person name="Barrell B.G."/>
        </authorList>
    </citation>
    <scope>NUCLEOTIDE SEQUENCE [LARGE SCALE GENOMIC DNA]</scope>
    <source>
        <strain>ATCC 25618 / H37Rv</strain>
    </source>
</reference>
<reference key="2">
    <citation type="journal article" date="2008" name="BMC Syst. Biol.">
        <title>targetTB: a target identification pipeline for Mycobacterium tuberculosis through an interactome, reactome and genome-scale structural analysis.</title>
        <authorList>
            <person name="Raman K."/>
            <person name="Yeturu K."/>
            <person name="Chandra N."/>
        </authorList>
    </citation>
    <scope>IDENTIFICATION AS A DRUG TARGET [LARGE SCALE ANALYSIS]</scope>
</reference>
<reference key="3">
    <citation type="journal article" date="2011" name="Mol. Cell. Proteomics">
        <title>Proteogenomic analysis of Mycobacterium tuberculosis by high resolution mass spectrometry.</title>
        <authorList>
            <person name="Kelkar D.S."/>
            <person name="Kumar D."/>
            <person name="Kumar P."/>
            <person name="Balakrishnan L."/>
            <person name="Muthusamy B."/>
            <person name="Yadav A.K."/>
            <person name="Shrivastava P."/>
            <person name="Marimuthu A."/>
            <person name="Anand S."/>
            <person name="Sundaram H."/>
            <person name="Kingsbury R."/>
            <person name="Harsha H.C."/>
            <person name="Nair B."/>
            <person name="Prasad T.S."/>
            <person name="Chauhan D.S."/>
            <person name="Katoch K."/>
            <person name="Katoch V.M."/>
            <person name="Kumar P."/>
            <person name="Chaerkady R."/>
            <person name="Ramachandran S."/>
            <person name="Dash D."/>
            <person name="Pandey A."/>
        </authorList>
    </citation>
    <scope>IDENTIFICATION BY MASS SPECTROMETRY [LARGE SCALE ANALYSIS]</scope>
    <source>
        <strain>ATCC 25618 / H37Rv</strain>
    </source>
</reference>
<proteinExistence type="evidence at protein level"/>
<sequence>MITTTSQEIELAPTRLPGSQNAARLFVAQTLLQTNRLLTRWARDYITVIGAIVLPILFMVVLNIVLGNLAYVVTHDSGLYSIVPLIALGAAITGSTFVAIDLMRERSFGLLARLWVLPVHRASGLISRILANAIRTLVTTLVMLGTGVVLGFRFRQGLIPSLMWISVPVILGIAIAAMVTTVALYTAQTVVVEGVELVQAIAIFFSTGLVPLNSYPGWIQPFVAHQPVSYAIAAMRGFAMGGPVLSPMIGMLVWTAGICVVCAVPLAIGYRRASTH</sequence>
<feature type="chain" id="PRO_0000393227" description="Probable doxorubicin resistance ABC transporter permease protein DrrC">
    <location>
        <begin position="1"/>
        <end position="276"/>
    </location>
</feature>
<feature type="transmembrane region" description="Helical" evidence="1">
    <location>
        <begin position="46"/>
        <end position="66"/>
    </location>
</feature>
<feature type="transmembrane region" description="Helical" evidence="1">
    <location>
        <begin position="82"/>
        <end position="102"/>
    </location>
</feature>
<feature type="transmembrane region" description="Helical" evidence="1">
    <location>
        <begin position="129"/>
        <end position="149"/>
    </location>
</feature>
<feature type="transmembrane region" description="Helical" evidence="1">
    <location>
        <begin position="159"/>
        <end position="179"/>
    </location>
</feature>
<feature type="transmembrane region" description="Helical" evidence="1">
    <location>
        <begin position="190"/>
        <end position="210"/>
    </location>
</feature>
<feature type="transmembrane region" description="Helical" evidence="1">
    <location>
        <begin position="248"/>
        <end position="268"/>
    </location>
</feature>
<feature type="domain" description="ABC transmembrane type-2" evidence="2">
    <location>
        <begin position="46"/>
        <end position="273"/>
    </location>
</feature>
<dbReference type="EMBL" id="AL123456">
    <property type="protein sequence ID" value="CCP45741.1"/>
    <property type="molecule type" value="Genomic_DNA"/>
</dbReference>
<dbReference type="PIR" id="F70984">
    <property type="entry name" value="F70984"/>
</dbReference>
<dbReference type="RefSeq" id="NP_217454.1">
    <property type="nucleotide sequence ID" value="NC_000962.3"/>
</dbReference>
<dbReference type="RefSeq" id="WP_003414851.1">
    <property type="nucleotide sequence ID" value="NZ_NVQJ01000015.1"/>
</dbReference>
<dbReference type="STRING" id="83332.Rv2938"/>
<dbReference type="PaxDb" id="83332-Rv2938"/>
<dbReference type="DNASU" id="888491"/>
<dbReference type="GeneID" id="888491"/>
<dbReference type="KEGG" id="mtu:Rv2938"/>
<dbReference type="KEGG" id="mtv:RVBD_2938"/>
<dbReference type="TubercuList" id="Rv2938"/>
<dbReference type="eggNOG" id="COG0842">
    <property type="taxonomic scope" value="Bacteria"/>
</dbReference>
<dbReference type="InParanoid" id="P9WG21"/>
<dbReference type="OrthoDB" id="26267at2"/>
<dbReference type="PhylomeDB" id="P9WG21"/>
<dbReference type="Proteomes" id="UP000001584">
    <property type="component" value="Chromosome"/>
</dbReference>
<dbReference type="GO" id="GO:0043190">
    <property type="term" value="C:ATP-binding cassette (ABC) transporter complex"/>
    <property type="evidence" value="ECO:0007669"/>
    <property type="project" value="InterPro"/>
</dbReference>
<dbReference type="GO" id="GO:0005576">
    <property type="term" value="C:extracellular region"/>
    <property type="evidence" value="ECO:0007005"/>
    <property type="project" value="MTBBASE"/>
</dbReference>
<dbReference type="GO" id="GO:0009274">
    <property type="term" value="C:peptidoglycan-based cell wall"/>
    <property type="evidence" value="ECO:0007005"/>
    <property type="project" value="MTBBASE"/>
</dbReference>
<dbReference type="GO" id="GO:0140359">
    <property type="term" value="F:ABC-type transporter activity"/>
    <property type="evidence" value="ECO:0007669"/>
    <property type="project" value="InterPro"/>
</dbReference>
<dbReference type="GO" id="GO:0043215">
    <property type="term" value="P:daunorubicin transport"/>
    <property type="evidence" value="ECO:0007669"/>
    <property type="project" value="InterPro"/>
</dbReference>
<dbReference type="GO" id="GO:1900753">
    <property type="term" value="P:doxorubicin transport"/>
    <property type="evidence" value="ECO:0007669"/>
    <property type="project" value="InterPro"/>
</dbReference>
<dbReference type="GO" id="GO:0046677">
    <property type="term" value="P:response to antibiotic"/>
    <property type="evidence" value="ECO:0007669"/>
    <property type="project" value="UniProtKB-KW"/>
</dbReference>
<dbReference type="InterPro" id="IPR052902">
    <property type="entry name" value="ABC-2_transporter"/>
</dbReference>
<dbReference type="InterPro" id="IPR013525">
    <property type="entry name" value="ABC2_TM"/>
</dbReference>
<dbReference type="InterPro" id="IPR047817">
    <property type="entry name" value="ABC2_TM_bact-type"/>
</dbReference>
<dbReference type="InterPro" id="IPR000412">
    <property type="entry name" value="ABC_2_transport"/>
</dbReference>
<dbReference type="InterPro" id="IPR004377">
    <property type="entry name" value="ABC_transpt_DrrB/DrrC"/>
</dbReference>
<dbReference type="InterPro" id="IPR005943">
    <property type="entry name" value="Daunbcin-R_C"/>
</dbReference>
<dbReference type="NCBIfam" id="TIGR01248">
    <property type="entry name" value="drrC"/>
    <property type="match status" value="1"/>
</dbReference>
<dbReference type="NCBIfam" id="TIGR00025">
    <property type="entry name" value="Mtu_efflux"/>
    <property type="match status" value="1"/>
</dbReference>
<dbReference type="PANTHER" id="PTHR43027">
    <property type="entry name" value="DOXORUBICIN RESISTANCE ABC TRANSPORTER PERMEASE PROTEIN DRRC-RELATED"/>
    <property type="match status" value="1"/>
</dbReference>
<dbReference type="PANTHER" id="PTHR43027:SF1">
    <property type="entry name" value="DOXORUBICIN RESISTANCE ABC TRANSPORTER PERMEASE PROTEIN DRRC-RELATED"/>
    <property type="match status" value="1"/>
</dbReference>
<dbReference type="Pfam" id="PF01061">
    <property type="entry name" value="ABC2_membrane"/>
    <property type="match status" value="1"/>
</dbReference>
<dbReference type="PIRSF" id="PIRSF006648">
    <property type="entry name" value="DrrB"/>
    <property type="match status" value="1"/>
</dbReference>
<dbReference type="PROSITE" id="PS51012">
    <property type="entry name" value="ABC_TM2"/>
    <property type="match status" value="1"/>
</dbReference>